<name>MDM10_ZYGRC</name>
<protein>
    <recommendedName>
        <fullName evidence="1">Mitochondrial distribution and morphology protein 10</fullName>
    </recommendedName>
    <alternativeName>
        <fullName evidence="1">Mitochondrial inheritance component MDM10</fullName>
    </alternativeName>
</protein>
<dbReference type="EMBL" id="CU928179">
    <property type="protein sequence ID" value="CAR29137.1"/>
    <property type="molecule type" value="Genomic_DNA"/>
</dbReference>
<dbReference type="RefSeq" id="XP_002498070.1">
    <property type="nucleotide sequence ID" value="XM_002498025.1"/>
</dbReference>
<dbReference type="SMR" id="C5E1U4"/>
<dbReference type="FunCoup" id="C5E1U4">
    <property type="interactions" value="87"/>
</dbReference>
<dbReference type="STRING" id="559307.C5E1U4"/>
<dbReference type="GeneID" id="8205856"/>
<dbReference type="KEGG" id="zro:ZYRO0G01540g"/>
<dbReference type="HOGENOM" id="CLU_026505_0_0_1"/>
<dbReference type="InParanoid" id="C5E1U4"/>
<dbReference type="Proteomes" id="UP000008536">
    <property type="component" value="Chromosome G"/>
</dbReference>
<dbReference type="GO" id="GO:0032865">
    <property type="term" value="C:ERMES complex"/>
    <property type="evidence" value="ECO:0007669"/>
    <property type="project" value="UniProtKB-UniRule"/>
</dbReference>
<dbReference type="GO" id="GO:0001401">
    <property type="term" value="C:SAM complex"/>
    <property type="evidence" value="ECO:0007669"/>
    <property type="project" value="TreeGrafter"/>
</dbReference>
<dbReference type="GO" id="GO:0051654">
    <property type="term" value="P:establishment of mitochondrion localization"/>
    <property type="evidence" value="ECO:0007669"/>
    <property type="project" value="TreeGrafter"/>
</dbReference>
<dbReference type="GO" id="GO:0000002">
    <property type="term" value="P:mitochondrial genome maintenance"/>
    <property type="evidence" value="ECO:0007669"/>
    <property type="project" value="UniProtKB-UniRule"/>
</dbReference>
<dbReference type="GO" id="GO:0070096">
    <property type="term" value="P:mitochondrial outer membrane translocase complex assembly"/>
    <property type="evidence" value="ECO:0007669"/>
    <property type="project" value="UniProtKB-UniRule"/>
</dbReference>
<dbReference type="GO" id="GO:1990456">
    <property type="term" value="P:mitochondrion-endoplasmic reticulum membrane tethering"/>
    <property type="evidence" value="ECO:0007669"/>
    <property type="project" value="UniProtKB-UniRule"/>
</dbReference>
<dbReference type="GO" id="GO:0015914">
    <property type="term" value="P:phospholipid transport"/>
    <property type="evidence" value="ECO:0007669"/>
    <property type="project" value="TreeGrafter"/>
</dbReference>
<dbReference type="GO" id="GO:0045040">
    <property type="term" value="P:protein insertion into mitochondrial outer membrane"/>
    <property type="evidence" value="ECO:0007669"/>
    <property type="project" value="UniProtKB-UniRule"/>
</dbReference>
<dbReference type="HAMAP" id="MF_03102">
    <property type="entry name" value="Mdm10"/>
    <property type="match status" value="1"/>
</dbReference>
<dbReference type="InterPro" id="IPR027539">
    <property type="entry name" value="Mdm10"/>
</dbReference>
<dbReference type="PANTHER" id="PTHR28035">
    <property type="entry name" value="MITOCHONDRIAL DISTRIBUTION AND MORPHOLOGY PROTEIN 10"/>
    <property type="match status" value="1"/>
</dbReference>
<dbReference type="PANTHER" id="PTHR28035:SF1">
    <property type="entry name" value="MITOCHONDRIAL DISTRIBUTION AND MORPHOLOGY PROTEIN 10"/>
    <property type="match status" value="1"/>
</dbReference>
<dbReference type="Pfam" id="PF12519">
    <property type="entry name" value="MDM10"/>
    <property type="match status" value="1"/>
</dbReference>
<sequence length="448" mass="51684">MLDYMDYVQRQFEKSTDWNYDNSYANILASSRNILDFPVPNQFKFQLSNNSTPHTFNTMEVFSRKIFNGSMTYLYTDAENMDKLVHDSNSISLQDVTDTYRYVQPYYTHKPSSNGDNHVRSLYYGKMSYPSPNLEAMLIKRLNESTQLTLQCVSSFNGFNILTGYWQHDTGRNRHEVIMSTNDLLCGYRYLHNFLGTPSKLKTSLYNNFSLSLGGEVWLGIVTLSPGCSTTLRYCTHSPTTGRPQTLTLTWNPLFGHISSTYTAKTSSSSTFSTKYDFNLYSIESNLSFGCEFWRRGYQESSPQLQEQINGHASEPKDRIMYYHMMAPDSRNSISPRANSPQERQLLEDLTIAFSSSLKKIDKEKSMIEQFENRINQSNFTSVWKLSTSSKDKNLRLLWEGKFKGFLLSAGTEFCKTNPRNEINEVPSTENKLTFYPNKFGIQLQYST</sequence>
<evidence type="ECO:0000255" key="1">
    <source>
        <dbReference type="HAMAP-Rule" id="MF_03102"/>
    </source>
</evidence>
<feature type="chain" id="PRO_0000384207" description="Mitochondrial distribution and morphology protein 10">
    <location>
        <begin position="1"/>
        <end position="448"/>
    </location>
</feature>
<comment type="function">
    <text evidence="1">Component of the ERMES/MDM complex, which serves as a molecular tether to connect the endoplasmic reticulum and mitochondria. Components of this complex are involved in the control of mitochondrial shape and protein biogenesis and may function in phospholipid exchange. MDM10 is involved in the late assembly steps of the general translocase of the mitochondrial outer membrane (TOM complex). Functions in the TOM40-specific route of the assembly of outer membrane beta-barrel proteins, including the association of TOM40 with the receptor TOM22 and small TOM proteins. Can associate with the SAM(core) complex as well as the MDM12-MMM1 complex, both involved in late steps of the major beta-barrel assembly pathway, that is responsible for biogenesis of all outer membrane beta-barrel proteins. May act as a switch that shuttles between both complexes and channels precursor proteins into the TOM40-specific pathway. Plays a role in mitochondrial morphology and in the inheritance of mitochondria.</text>
</comment>
<comment type="subunit">
    <text evidence="1">Component of the ER-mitochondria encounter structure (ERMES) or MDM complex, composed of MMM1, MDM10, MDM12 and MDM34. Associates with the mitochondrial outer membrane sorting assembly machinery SAM(core) complex.</text>
</comment>
<comment type="subcellular location">
    <subcellularLocation>
        <location evidence="1">Mitochondrion outer membrane</location>
        <topology evidence="1">Multi-pass membrane protein</topology>
    </subcellularLocation>
    <text evidence="1">The ERMES/MDM complex localizes to a few discrete foci (around 10 per single cell), that represent mitochondria-endoplasmic reticulum junctions. These foci are often found next to mtDNA nucleoids.</text>
</comment>
<comment type="domain">
    <text>Lacks alpha-helical transmembrane segments, suggesting that it resides in the membrane via beta-sheet conformations similar to those predicted for other outer membrane proteins and porin.</text>
</comment>
<comment type="similarity">
    <text evidence="1">Belongs to the MDM10 family.</text>
</comment>
<organism>
    <name type="scientific">Zygosaccharomyces rouxii (strain ATCC 2623 / CBS 732 / NBRC 1130 / NCYC 568 / NRRL Y-229)</name>
    <dbReference type="NCBI Taxonomy" id="559307"/>
    <lineage>
        <taxon>Eukaryota</taxon>
        <taxon>Fungi</taxon>
        <taxon>Dikarya</taxon>
        <taxon>Ascomycota</taxon>
        <taxon>Saccharomycotina</taxon>
        <taxon>Saccharomycetes</taxon>
        <taxon>Saccharomycetales</taxon>
        <taxon>Saccharomycetaceae</taxon>
        <taxon>Zygosaccharomyces</taxon>
    </lineage>
</organism>
<accession>C5E1U4</accession>
<reference key="1">
    <citation type="journal article" date="2009" name="Genome Res.">
        <title>Comparative genomics of protoploid Saccharomycetaceae.</title>
        <authorList>
            <consortium name="The Genolevures Consortium"/>
            <person name="Souciet J.-L."/>
            <person name="Dujon B."/>
            <person name="Gaillardin C."/>
            <person name="Johnston M."/>
            <person name="Baret P.V."/>
            <person name="Cliften P."/>
            <person name="Sherman D.J."/>
            <person name="Weissenbach J."/>
            <person name="Westhof E."/>
            <person name="Wincker P."/>
            <person name="Jubin C."/>
            <person name="Poulain J."/>
            <person name="Barbe V."/>
            <person name="Segurens B."/>
            <person name="Artiguenave F."/>
            <person name="Anthouard V."/>
            <person name="Vacherie B."/>
            <person name="Val M.-E."/>
            <person name="Fulton R.S."/>
            <person name="Minx P."/>
            <person name="Wilson R."/>
            <person name="Durrens P."/>
            <person name="Jean G."/>
            <person name="Marck C."/>
            <person name="Martin T."/>
            <person name="Nikolski M."/>
            <person name="Rolland T."/>
            <person name="Seret M.-L."/>
            <person name="Casaregola S."/>
            <person name="Despons L."/>
            <person name="Fairhead C."/>
            <person name="Fischer G."/>
            <person name="Lafontaine I."/>
            <person name="Leh V."/>
            <person name="Lemaire M."/>
            <person name="de Montigny J."/>
            <person name="Neuveglise C."/>
            <person name="Thierry A."/>
            <person name="Blanc-Lenfle I."/>
            <person name="Bleykasten C."/>
            <person name="Diffels J."/>
            <person name="Fritsch E."/>
            <person name="Frangeul L."/>
            <person name="Goeffon A."/>
            <person name="Jauniaux N."/>
            <person name="Kachouri-Lafond R."/>
            <person name="Payen C."/>
            <person name="Potier S."/>
            <person name="Pribylova L."/>
            <person name="Ozanne C."/>
            <person name="Richard G.-F."/>
            <person name="Sacerdot C."/>
            <person name="Straub M.-L."/>
            <person name="Talla E."/>
        </authorList>
    </citation>
    <scope>NUCLEOTIDE SEQUENCE [LARGE SCALE GENOMIC DNA]</scope>
    <source>
        <strain>ATCC 2623 / CBS 732 / BCRC 21506 / NBRC 1130 / NCYC 568 / NRRL Y-229</strain>
    </source>
</reference>
<keyword id="KW-0472">Membrane</keyword>
<keyword id="KW-0496">Mitochondrion</keyword>
<keyword id="KW-1000">Mitochondrion outer membrane</keyword>
<keyword id="KW-1185">Reference proteome</keyword>
<keyword id="KW-0812">Transmembrane</keyword>
<keyword id="KW-1134">Transmembrane beta strand</keyword>
<proteinExistence type="inferred from homology"/>
<gene>
    <name evidence="1" type="primary">MDM10</name>
    <name type="ordered locus">ZYRO0G01540g</name>
</gene>